<keyword id="KW-0520">NAD</keyword>
<keyword id="KW-0560">Oxidoreductase</keyword>
<organism>
    <name type="scientific">Leuconostoc mesenteroides subsp. cremoris</name>
    <dbReference type="NCBI Taxonomy" id="33965"/>
    <lineage>
        <taxon>Bacteria</taxon>
        <taxon>Bacillati</taxon>
        <taxon>Bacillota</taxon>
        <taxon>Bacilli</taxon>
        <taxon>Lactobacillales</taxon>
        <taxon>Lactobacillaceae</taxon>
        <taxon>Leuconostoc</taxon>
    </lineage>
</organism>
<protein>
    <recommendedName>
        <fullName>D-lactate dehydrogenase</fullName>
        <shortName>D-LDH</shortName>
        <ecNumber>1.1.1.28</ecNumber>
    </recommendedName>
    <alternativeName>
        <fullName>D-specific 2-hydroxyacid dehydrogenase</fullName>
    </alternativeName>
</protein>
<sequence length="331" mass="36316">MKIFAYGIRDDEKPSLEEWKAANPEIEVDYTQELLTPETAKLAEGSDSAVVYQQLDYTRETLTALANVGVTNLSLRNVGTDNIDFDAAREFNFNISNVPVYSPNAIAEHSMLQLSRLLRRTKALDAKIAKRDLRWAPTTGREMRMQTVGVIGTGHIGRVAINILKGFGAKVIAYDKYPNAELQAEGLYVDTLDELYAQADAISLYVPGVPENHHLINADAIAKMKDGVVIMNAARGNLMDIDAIIDGLNSGKISDFGMDVYENEVACSMKIGLVKNSPDAKIADLIARENVMITPHTAFYTTKAVLEMVHQSFDAAVAFAKGEKPAIAVEY</sequence>
<name>LDHD_LEUMC</name>
<reference key="1">
    <citation type="journal article" date="1995" name="Res. Microbiol.">
        <title>Purification, properties and DNA sequence of the D-lactate dehydrogenase from Leuconostoc mesenteroides subsp. cremoris.</title>
        <authorList>
            <person name="Dartois V."/>
            <person name="Phalip V."/>
            <person name="Schmitt P."/>
            <person name="Divies C."/>
        </authorList>
    </citation>
    <scope>NUCLEOTIDE SEQUENCE [GENOMIC DNA]</scope>
    <source>
        <strain>195</strain>
    </source>
</reference>
<comment type="catalytic activity">
    <reaction>
        <text>(R)-lactate + NAD(+) = pyruvate + NADH + H(+)</text>
        <dbReference type="Rhea" id="RHEA:16369"/>
        <dbReference type="ChEBI" id="CHEBI:15361"/>
        <dbReference type="ChEBI" id="CHEBI:15378"/>
        <dbReference type="ChEBI" id="CHEBI:16004"/>
        <dbReference type="ChEBI" id="CHEBI:57540"/>
        <dbReference type="ChEBI" id="CHEBI:57945"/>
        <dbReference type="EC" id="1.1.1.28"/>
    </reaction>
</comment>
<comment type="subunit">
    <text>Homodimer.</text>
</comment>
<comment type="similarity">
    <text evidence="3">Belongs to the D-isomer specific 2-hydroxyacid dehydrogenase family.</text>
</comment>
<evidence type="ECO:0000250" key="1">
    <source>
        <dbReference type="UniProtKB" id="P26297"/>
    </source>
</evidence>
<evidence type="ECO:0000250" key="2">
    <source>
        <dbReference type="UniProtKB" id="P30901"/>
    </source>
</evidence>
<evidence type="ECO:0000305" key="3"/>
<feature type="chain" id="PRO_0000075957" description="D-lactate dehydrogenase">
    <location>
        <begin position="1"/>
        <end position="331"/>
    </location>
</feature>
<feature type="active site" evidence="1">
    <location>
        <position position="235"/>
    </location>
</feature>
<feature type="active site" evidence="1">
    <location>
        <position position="264"/>
    </location>
</feature>
<feature type="active site" description="Proton donor" evidence="1">
    <location>
        <position position="296"/>
    </location>
</feature>
<feature type="binding site" evidence="2">
    <location>
        <begin position="155"/>
        <end position="156"/>
    </location>
    <ligand>
        <name>NAD(+)</name>
        <dbReference type="ChEBI" id="CHEBI:57540"/>
    </ligand>
</feature>
<feature type="binding site" evidence="1">
    <location>
        <position position="175"/>
    </location>
    <ligand>
        <name>NAD(+)</name>
        <dbReference type="ChEBI" id="CHEBI:57540"/>
    </ligand>
</feature>
<feature type="binding site" evidence="2">
    <location>
        <begin position="206"/>
        <end position="207"/>
    </location>
    <ligand>
        <name>NAD(+)</name>
        <dbReference type="ChEBI" id="CHEBI:57540"/>
    </ligand>
</feature>
<feature type="binding site" evidence="2">
    <location>
        <position position="212"/>
    </location>
    <ligand>
        <name>NAD(+)</name>
        <dbReference type="ChEBI" id="CHEBI:57540"/>
    </ligand>
</feature>
<feature type="binding site" evidence="2">
    <location>
        <begin position="233"/>
        <end position="235"/>
    </location>
    <ligand>
        <name>NAD(+)</name>
        <dbReference type="ChEBI" id="CHEBI:57540"/>
    </ligand>
</feature>
<feature type="binding site" evidence="2">
    <location>
        <position position="259"/>
    </location>
    <ligand>
        <name>NAD(+)</name>
        <dbReference type="ChEBI" id="CHEBI:57540"/>
    </ligand>
</feature>
<dbReference type="EC" id="1.1.1.28"/>
<dbReference type="EMBL" id="L29327">
    <property type="protein sequence ID" value="AAA99506.1"/>
    <property type="molecule type" value="Genomic_DNA"/>
</dbReference>
<dbReference type="SMR" id="P51011"/>
<dbReference type="BioCyc" id="MetaCyc:MONOMER-13061"/>
<dbReference type="BRENDA" id="1.1.1.28">
    <property type="organism ID" value="839"/>
</dbReference>
<dbReference type="GO" id="GO:0008720">
    <property type="term" value="F:D-lactate dehydrogenase activity"/>
    <property type="evidence" value="ECO:0007669"/>
    <property type="project" value="UniProtKB-EC"/>
</dbReference>
<dbReference type="GO" id="GO:0051287">
    <property type="term" value="F:NAD binding"/>
    <property type="evidence" value="ECO:0007669"/>
    <property type="project" value="InterPro"/>
</dbReference>
<dbReference type="CDD" id="cd12186">
    <property type="entry name" value="LDH"/>
    <property type="match status" value="1"/>
</dbReference>
<dbReference type="Gene3D" id="3.40.50.720">
    <property type="entry name" value="NAD(P)-binding Rossmann-like Domain"/>
    <property type="match status" value="2"/>
</dbReference>
<dbReference type="InterPro" id="IPR006139">
    <property type="entry name" value="D-isomer_2_OHA_DH_cat_dom"/>
</dbReference>
<dbReference type="InterPro" id="IPR029753">
    <property type="entry name" value="D-isomer_DH_CS"/>
</dbReference>
<dbReference type="InterPro" id="IPR029752">
    <property type="entry name" value="D-isomer_DH_CS1"/>
</dbReference>
<dbReference type="InterPro" id="IPR006140">
    <property type="entry name" value="D-isomer_DH_NAD-bd"/>
</dbReference>
<dbReference type="InterPro" id="IPR036291">
    <property type="entry name" value="NAD(P)-bd_dom_sf"/>
</dbReference>
<dbReference type="PANTHER" id="PTHR43026">
    <property type="entry name" value="2-HYDROXYACID DEHYDROGENASE HOMOLOG 1-RELATED"/>
    <property type="match status" value="1"/>
</dbReference>
<dbReference type="PANTHER" id="PTHR43026:SF1">
    <property type="entry name" value="2-HYDROXYACID DEHYDROGENASE HOMOLOG 1-RELATED"/>
    <property type="match status" value="1"/>
</dbReference>
<dbReference type="Pfam" id="PF00389">
    <property type="entry name" value="2-Hacid_dh"/>
    <property type="match status" value="1"/>
</dbReference>
<dbReference type="Pfam" id="PF02826">
    <property type="entry name" value="2-Hacid_dh_C"/>
    <property type="match status" value="1"/>
</dbReference>
<dbReference type="SUPFAM" id="SSF52283">
    <property type="entry name" value="Formate/glycerate dehydrogenase catalytic domain-like"/>
    <property type="match status" value="1"/>
</dbReference>
<dbReference type="SUPFAM" id="SSF51735">
    <property type="entry name" value="NAD(P)-binding Rossmann-fold domains"/>
    <property type="match status" value="1"/>
</dbReference>
<dbReference type="PROSITE" id="PS00065">
    <property type="entry name" value="D_2_HYDROXYACID_DH_1"/>
    <property type="match status" value="1"/>
</dbReference>
<dbReference type="PROSITE" id="PS00671">
    <property type="entry name" value="D_2_HYDROXYACID_DH_3"/>
    <property type="match status" value="1"/>
</dbReference>
<proteinExistence type="inferred from homology"/>
<accession>P51011</accession>